<comment type="function">
    <text evidence="2">Component of the ubiquinol-cytochrome c reductase complex (complex III or cytochrome b-c1 complex) that is part of the mitochondrial respiratory chain. The b-c1 complex mediates electron transfer from ubiquinol to cytochrome c. Contributes to the generation of a proton gradient across the mitochondrial membrane that is then used for ATP synthesis.</text>
</comment>
<comment type="cofactor">
    <cofactor evidence="2">
        <name>heme b</name>
        <dbReference type="ChEBI" id="CHEBI:60344"/>
    </cofactor>
    <text evidence="2">Binds 2 heme b groups non-covalently.</text>
</comment>
<comment type="subunit">
    <text evidence="2">The cytochrome bc1 complex contains 11 subunits: 3 respiratory subunits (MT-CYB, CYC1 and UQCRFS1), 2 core proteins (UQCRC1 and UQCRC2) and 6 low-molecular weight proteins (UQCRH/QCR6, UQCRB/QCR7, UQCRQ/QCR8, UQCR10/QCR9, UQCR11/QCR10 and a cleavage product of UQCRFS1). This cytochrome bc1 complex then forms a dimer.</text>
</comment>
<comment type="subcellular location">
    <subcellularLocation>
        <location evidence="2">Mitochondrion inner membrane</location>
        <topology evidence="2">Multi-pass membrane protein</topology>
    </subcellularLocation>
</comment>
<comment type="miscellaneous">
    <text evidence="1">Heme 1 (or BL or b562) is low-potential and absorbs at about 562 nm, and heme 2 (or BH or b566) is high-potential and absorbs at about 566 nm.</text>
</comment>
<comment type="similarity">
    <text evidence="3 4">Belongs to the cytochrome b family.</text>
</comment>
<comment type="caution">
    <text evidence="2">The full-length protein contains only eight transmembrane helices, not nine as predicted by bioinformatics tools.</text>
</comment>
<protein>
    <recommendedName>
        <fullName>Cytochrome b</fullName>
    </recommendedName>
    <alternativeName>
        <fullName>Complex III subunit 3</fullName>
    </alternativeName>
    <alternativeName>
        <fullName>Complex III subunit III</fullName>
    </alternativeName>
    <alternativeName>
        <fullName>Cytochrome b-c1 complex subunit 3</fullName>
    </alternativeName>
    <alternativeName>
        <fullName>Ubiquinol-cytochrome-c reductase complex cytochrome b subunit</fullName>
    </alternativeName>
</protein>
<reference key="1">
    <citation type="journal article" date="1999" name="J. Mammal. Evol.">
        <title>Phylogenetic relationships and the radiation of sigmodontine rodents in South America: evidence from cytochrome b.</title>
        <authorList>
            <person name="Smith M.F."/>
            <person name="Patton J.L."/>
        </authorList>
    </citation>
    <scope>NUCLEOTIDE SEQUENCE [GENOMIC DNA]</scope>
    <source>
        <strain>Isolate MVZ 171502</strain>
    </source>
</reference>
<dbReference type="EMBL" id="AF108673">
    <property type="protein sequence ID" value="AAD45455.1"/>
    <property type="molecule type" value="Genomic_DNA"/>
</dbReference>
<dbReference type="GO" id="GO:0005743">
    <property type="term" value="C:mitochondrial inner membrane"/>
    <property type="evidence" value="ECO:0007669"/>
    <property type="project" value="UniProtKB-SubCell"/>
</dbReference>
<dbReference type="GO" id="GO:0045275">
    <property type="term" value="C:respiratory chain complex III"/>
    <property type="evidence" value="ECO:0007669"/>
    <property type="project" value="InterPro"/>
</dbReference>
<dbReference type="GO" id="GO:0046872">
    <property type="term" value="F:metal ion binding"/>
    <property type="evidence" value="ECO:0007669"/>
    <property type="project" value="UniProtKB-KW"/>
</dbReference>
<dbReference type="GO" id="GO:0008121">
    <property type="term" value="F:ubiquinol-cytochrome-c reductase activity"/>
    <property type="evidence" value="ECO:0007669"/>
    <property type="project" value="InterPro"/>
</dbReference>
<dbReference type="GO" id="GO:0006122">
    <property type="term" value="P:mitochondrial electron transport, ubiquinol to cytochrome c"/>
    <property type="evidence" value="ECO:0007669"/>
    <property type="project" value="TreeGrafter"/>
</dbReference>
<dbReference type="CDD" id="cd00290">
    <property type="entry name" value="cytochrome_b_C"/>
    <property type="match status" value="1"/>
</dbReference>
<dbReference type="CDD" id="cd00284">
    <property type="entry name" value="Cytochrome_b_N"/>
    <property type="match status" value="1"/>
</dbReference>
<dbReference type="FunFam" id="1.20.810.10:FF:000002">
    <property type="entry name" value="Cytochrome b"/>
    <property type="match status" value="1"/>
</dbReference>
<dbReference type="Gene3D" id="1.20.810.10">
    <property type="entry name" value="Cytochrome Bc1 Complex, Chain C"/>
    <property type="match status" value="1"/>
</dbReference>
<dbReference type="InterPro" id="IPR005798">
    <property type="entry name" value="Cyt_b/b6_C"/>
</dbReference>
<dbReference type="InterPro" id="IPR036150">
    <property type="entry name" value="Cyt_b/b6_C_sf"/>
</dbReference>
<dbReference type="InterPro" id="IPR005797">
    <property type="entry name" value="Cyt_b/b6_N"/>
</dbReference>
<dbReference type="InterPro" id="IPR027387">
    <property type="entry name" value="Cytb/b6-like_sf"/>
</dbReference>
<dbReference type="InterPro" id="IPR030689">
    <property type="entry name" value="Cytochrome_b"/>
</dbReference>
<dbReference type="InterPro" id="IPR048260">
    <property type="entry name" value="Cytochrome_b_C_euk/bac"/>
</dbReference>
<dbReference type="InterPro" id="IPR048259">
    <property type="entry name" value="Cytochrome_b_N_euk/bac"/>
</dbReference>
<dbReference type="InterPro" id="IPR016174">
    <property type="entry name" value="Di-haem_cyt_TM"/>
</dbReference>
<dbReference type="PANTHER" id="PTHR19271">
    <property type="entry name" value="CYTOCHROME B"/>
    <property type="match status" value="1"/>
</dbReference>
<dbReference type="PANTHER" id="PTHR19271:SF16">
    <property type="entry name" value="CYTOCHROME B"/>
    <property type="match status" value="1"/>
</dbReference>
<dbReference type="Pfam" id="PF00032">
    <property type="entry name" value="Cytochrom_B_C"/>
    <property type="match status" value="1"/>
</dbReference>
<dbReference type="Pfam" id="PF00033">
    <property type="entry name" value="Cytochrome_B"/>
    <property type="match status" value="1"/>
</dbReference>
<dbReference type="PIRSF" id="PIRSF038885">
    <property type="entry name" value="COB"/>
    <property type="match status" value="1"/>
</dbReference>
<dbReference type="SUPFAM" id="SSF81648">
    <property type="entry name" value="a domain/subunit of cytochrome bc1 complex (Ubiquinol-cytochrome c reductase)"/>
    <property type="match status" value="1"/>
</dbReference>
<dbReference type="SUPFAM" id="SSF81342">
    <property type="entry name" value="Transmembrane di-heme cytochromes"/>
    <property type="match status" value="1"/>
</dbReference>
<dbReference type="PROSITE" id="PS51003">
    <property type="entry name" value="CYTB_CTER"/>
    <property type="match status" value="1"/>
</dbReference>
<dbReference type="PROSITE" id="PS51002">
    <property type="entry name" value="CYTB_NTER"/>
    <property type="match status" value="1"/>
</dbReference>
<feature type="chain" id="PRO_0000061659" description="Cytochrome b">
    <location>
        <begin position="1"/>
        <end position="381"/>
    </location>
</feature>
<feature type="transmembrane region" description="Helical" evidence="2">
    <location>
        <begin position="33"/>
        <end position="53"/>
    </location>
</feature>
<feature type="transmembrane region" description="Helical" evidence="2">
    <location>
        <begin position="77"/>
        <end position="98"/>
    </location>
</feature>
<feature type="transmembrane region" description="Helical" evidence="2">
    <location>
        <begin position="113"/>
        <end position="133"/>
    </location>
</feature>
<feature type="transmembrane region" description="Helical" evidence="2">
    <location>
        <begin position="178"/>
        <end position="198"/>
    </location>
</feature>
<feature type="transmembrane region" description="Helical" evidence="2">
    <location>
        <begin position="226"/>
        <end position="246"/>
    </location>
</feature>
<feature type="transmembrane region" description="Helical" evidence="2">
    <location>
        <begin position="288"/>
        <end position="308"/>
    </location>
</feature>
<feature type="transmembrane region" description="Helical" evidence="2">
    <location>
        <begin position="320"/>
        <end position="340"/>
    </location>
</feature>
<feature type="transmembrane region" description="Helical" evidence="2">
    <location>
        <begin position="347"/>
        <end position="367"/>
    </location>
</feature>
<feature type="binding site" description="axial binding residue" evidence="2">
    <location>
        <position position="83"/>
    </location>
    <ligand>
        <name>heme b</name>
        <dbReference type="ChEBI" id="CHEBI:60344"/>
        <label>b562</label>
    </ligand>
    <ligandPart>
        <name>Fe</name>
        <dbReference type="ChEBI" id="CHEBI:18248"/>
    </ligandPart>
</feature>
<feature type="binding site" description="axial binding residue" evidence="2">
    <location>
        <position position="97"/>
    </location>
    <ligand>
        <name>heme b</name>
        <dbReference type="ChEBI" id="CHEBI:60344"/>
        <label>b566</label>
    </ligand>
    <ligandPart>
        <name>Fe</name>
        <dbReference type="ChEBI" id="CHEBI:18248"/>
    </ligandPart>
</feature>
<feature type="binding site" description="axial binding residue" evidence="2">
    <location>
        <position position="182"/>
    </location>
    <ligand>
        <name>heme b</name>
        <dbReference type="ChEBI" id="CHEBI:60344"/>
        <label>b562</label>
    </ligand>
    <ligandPart>
        <name>Fe</name>
        <dbReference type="ChEBI" id="CHEBI:18248"/>
    </ligandPart>
</feature>
<feature type="binding site" description="axial binding residue" evidence="2">
    <location>
        <position position="196"/>
    </location>
    <ligand>
        <name>heme b</name>
        <dbReference type="ChEBI" id="CHEBI:60344"/>
        <label>b566</label>
    </ligand>
    <ligandPart>
        <name>Fe</name>
        <dbReference type="ChEBI" id="CHEBI:18248"/>
    </ligandPart>
</feature>
<feature type="binding site" evidence="2">
    <location>
        <position position="201"/>
    </location>
    <ligand>
        <name>a ubiquinone</name>
        <dbReference type="ChEBI" id="CHEBI:16389"/>
    </ligand>
</feature>
<proteinExistence type="inferred from homology"/>
<organism>
    <name type="scientific">Thomasomys daphne</name>
    <name type="common">Daphne's oldfield mouse</name>
    <dbReference type="NCBI Taxonomy" id="89108"/>
    <lineage>
        <taxon>Eukaryota</taxon>
        <taxon>Metazoa</taxon>
        <taxon>Chordata</taxon>
        <taxon>Craniata</taxon>
        <taxon>Vertebrata</taxon>
        <taxon>Euteleostomi</taxon>
        <taxon>Mammalia</taxon>
        <taxon>Eutheria</taxon>
        <taxon>Euarchontoglires</taxon>
        <taxon>Glires</taxon>
        <taxon>Rodentia</taxon>
        <taxon>Myomorpha</taxon>
        <taxon>Muroidea</taxon>
        <taxon>Cricetidae</taxon>
        <taxon>Sigmodontinae</taxon>
        <taxon>Thomasomys</taxon>
    </lineage>
</organism>
<geneLocation type="mitochondrion"/>
<evidence type="ECO:0000250" key="1"/>
<evidence type="ECO:0000250" key="2">
    <source>
        <dbReference type="UniProtKB" id="P00157"/>
    </source>
</evidence>
<evidence type="ECO:0000255" key="3">
    <source>
        <dbReference type="PROSITE-ProRule" id="PRU00967"/>
    </source>
</evidence>
<evidence type="ECO:0000255" key="4">
    <source>
        <dbReference type="PROSITE-ProRule" id="PRU00968"/>
    </source>
</evidence>
<sequence>MTIMRKNHPLLKLINHSFIDLPTPSNISSWWNFGSLLGICLIIQILTGLFLAMHYTSDTTTAFSSVAHICRDVNYGWLIRYLHANGASMFFICLFIHVGRGIYYGSYMLLKTWNIGIXLFLTTMPTAFVGYVLPWGQMSFWGATVITNLLSAIPYIGNTLVEWIWGGFSVDKATLTRFFAFHFILPFIITALVLVHLLFLHETGSTNPSGLNSNSDKIPFHPYYTIKDLLGVLLLLMVLMILVLFFPDILGDPDNYTPANPLNTPAHIKPEWYFLFAYAILRSIPNKLGGVLALILSILILAAFPLLNSSKQHGLVYRPITQFLYWIFIANLLILTWIGGQPVEYPFTLIGQISSILYFAIIVILMPLASMIENNILKLHD</sequence>
<name>CYB_THODA</name>
<gene>
    <name type="primary">MT-CYB</name>
    <name type="synonym">COB</name>
    <name type="synonym">CYTB</name>
    <name type="synonym">MTCYB</name>
</gene>
<accession>Q9XNX1</accession>
<keyword id="KW-0249">Electron transport</keyword>
<keyword id="KW-0349">Heme</keyword>
<keyword id="KW-0408">Iron</keyword>
<keyword id="KW-0472">Membrane</keyword>
<keyword id="KW-0479">Metal-binding</keyword>
<keyword id="KW-0496">Mitochondrion</keyword>
<keyword id="KW-0999">Mitochondrion inner membrane</keyword>
<keyword id="KW-0679">Respiratory chain</keyword>
<keyword id="KW-0812">Transmembrane</keyword>
<keyword id="KW-1133">Transmembrane helix</keyword>
<keyword id="KW-0813">Transport</keyword>
<keyword id="KW-0830">Ubiquinone</keyword>